<comment type="function">
    <text evidence="3">Hydrolyzes fatty acids from S-acylated cysteine residues in proteins. Has depalmitoylating activity towards NRAS and DLG4/PSD95.</text>
</comment>
<comment type="catalytic activity">
    <reaction evidence="3">
        <text>S-hexadecanoyl-L-cysteinyl-[protein] + H2O = L-cysteinyl-[protein] + hexadecanoate + H(+)</text>
        <dbReference type="Rhea" id="RHEA:19233"/>
        <dbReference type="Rhea" id="RHEA-COMP:10131"/>
        <dbReference type="Rhea" id="RHEA-COMP:11032"/>
        <dbReference type="ChEBI" id="CHEBI:7896"/>
        <dbReference type="ChEBI" id="CHEBI:15377"/>
        <dbReference type="ChEBI" id="CHEBI:15378"/>
        <dbReference type="ChEBI" id="CHEBI:29950"/>
        <dbReference type="ChEBI" id="CHEBI:74151"/>
        <dbReference type="EC" id="3.1.2.22"/>
    </reaction>
</comment>
<comment type="subcellular location">
    <subcellularLocation>
        <location evidence="1">Recycling endosome membrane</location>
        <topology evidence="1">Lipid-anchor</topology>
        <orientation evidence="1">Cytoplasmic side</orientation>
    </subcellularLocation>
    <subcellularLocation>
        <location evidence="1">Cell projection</location>
        <location evidence="1">Dendritic spine</location>
    </subcellularLocation>
    <subcellularLocation>
        <location evidence="1">Postsynaptic density membrane</location>
    </subcellularLocation>
</comment>
<comment type="PTM">
    <text evidence="4">Palmitoylated on cysteine residues located in a cysteine cluster at the N-terminus which promotes membrane localization. Palmitoylation is required for post-synaptic localization and for depalmitoylating activity towards DLG4/PSD95.</text>
</comment>
<comment type="similarity">
    <text evidence="8">Belongs to the AB hydrolase superfamily. ABHD17 family.</text>
</comment>
<proteinExistence type="evidence at transcript level"/>
<feature type="chain" id="PRO_0000297512" description="Alpha/beta hydrolase domain-containing protein 17C">
    <location>
        <begin position="1"/>
        <end position="329"/>
    </location>
</feature>
<feature type="region of interest" description="Disordered" evidence="7">
    <location>
        <begin position="46"/>
        <end position="85"/>
    </location>
</feature>
<feature type="compositionally biased region" description="Low complexity" evidence="7">
    <location>
        <begin position="51"/>
        <end position="79"/>
    </location>
</feature>
<feature type="active site" description="Charge relay system" evidence="6">
    <location>
        <position position="211"/>
    </location>
</feature>
<feature type="active site" description="Charge relay system" evidence="2">
    <location>
        <position position="276"/>
    </location>
</feature>
<feature type="active site" description="Charge relay system" evidence="2">
    <location>
        <position position="305"/>
    </location>
</feature>
<reference key="1">
    <citation type="submission" date="2007-06" db="EMBL/GenBank/DDBJ databases">
        <authorList>
            <consortium name="NIH - Mammalian Gene Collection (MGC) project"/>
        </authorList>
    </citation>
    <scope>NUCLEOTIDE SEQUENCE [LARGE SCALE MRNA]</scope>
    <source>
        <strain>Hereford</strain>
        <tissue>Hypothalamus</tissue>
    </source>
</reference>
<dbReference type="EC" id="3.1.2.22" evidence="5"/>
<dbReference type="EMBL" id="BC142452">
    <property type="protein sequence ID" value="AAI42453.1"/>
    <property type="molecule type" value="mRNA"/>
</dbReference>
<dbReference type="RefSeq" id="NP_001092484.1">
    <property type="nucleotide sequence ID" value="NM_001099014.1"/>
</dbReference>
<dbReference type="SMR" id="A5PKD9"/>
<dbReference type="FunCoup" id="A5PKD9">
    <property type="interactions" value="457"/>
</dbReference>
<dbReference type="STRING" id="9913.ENSBTAP00000044044"/>
<dbReference type="ESTHER" id="bovin-AB17C">
    <property type="family name" value="ABHD17-depalmitoylase"/>
</dbReference>
<dbReference type="PaxDb" id="9913-ENSBTAP00000044044"/>
<dbReference type="Ensembl" id="ENSBTAT00000046785.5">
    <property type="protein sequence ID" value="ENSBTAP00000044044.3"/>
    <property type="gene ID" value="ENSBTAG00000032951.5"/>
</dbReference>
<dbReference type="GeneID" id="520956"/>
<dbReference type="KEGG" id="bta:520956"/>
<dbReference type="CTD" id="58489"/>
<dbReference type="VEuPathDB" id="HostDB:ENSBTAG00000032951"/>
<dbReference type="VGNC" id="VGNC:53931">
    <property type="gene designation" value="ABHD17C"/>
</dbReference>
<dbReference type="eggNOG" id="KOG1552">
    <property type="taxonomic scope" value="Eukaryota"/>
</dbReference>
<dbReference type="GeneTree" id="ENSGT00940000159424"/>
<dbReference type="HOGENOM" id="CLU_029375_5_4_1"/>
<dbReference type="InParanoid" id="A5PKD9"/>
<dbReference type="OMA" id="YSEREKX"/>
<dbReference type="OrthoDB" id="446723at2759"/>
<dbReference type="TreeFam" id="TF314365"/>
<dbReference type="Reactome" id="R-BTA-9648002">
    <property type="pathway name" value="RAS processing"/>
</dbReference>
<dbReference type="Proteomes" id="UP000009136">
    <property type="component" value="Chromosome 21"/>
</dbReference>
<dbReference type="Bgee" id="ENSBTAG00000032951">
    <property type="expression patterns" value="Expressed in rumen papilla and 101 other cell types or tissues"/>
</dbReference>
<dbReference type="GO" id="GO:0043197">
    <property type="term" value="C:dendritic spine"/>
    <property type="evidence" value="ECO:0007669"/>
    <property type="project" value="UniProtKB-SubCell"/>
</dbReference>
<dbReference type="GO" id="GO:0010008">
    <property type="term" value="C:endosome membrane"/>
    <property type="evidence" value="ECO:0000318"/>
    <property type="project" value="GO_Central"/>
</dbReference>
<dbReference type="GO" id="GO:0005886">
    <property type="term" value="C:plasma membrane"/>
    <property type="evidence" value="ECO:0000318"/>
    <property type="project" value="GO_Central"/>
</dbReference>
<dbReference type="GO" id="GO:0098839">
    <property type="term" value="C:postsynaptic density membrane"/>
    <property type="evidence" value="ECO:0007669"/>
    <property type="project" value="UniProtKB-SubCell"/>
</dbReference>
<dbReference type="GO" id="GO:0055038">
    <property type="term" value="C:recycling endosome membrane"/>
    <property type="evidence" value="ECO:0007669"/>
    <property type="project" value="UniProtKB-SubCell"/>
</dbReference>
<dbReference type="GO" id="GO:0008474">
    <property type="term" value="F:palmitoyl-(protein) hydrolase activity"/>
    <property type="evidence" value="ECO:0000318"/>
    <property type="project" value="GO_Central"/>
</dbReference>
<dbReference type="GO" id="GO:1902817">
    <property type="term" value="P:negative regulation of protein localization to microtubule"/>
    <property type="evidence" value="ECO:0007669"/>
    <property type="project" value="Ensembl"/>
</dbReference>
<dbReference type="GO" id="GO:1905668">
    <property type="term" value="P:positive regulation of protein localization to endosome"/>
    <property type="evidence" value="ECO:0007669"/>
    <property type="project" value="Ensembl"/>
</dbReference>
<dbReference type="GO" id="GO:0099175">
    <property type="term" value="P:regulation of postsynapse organization"/>
    <property type="evidence" value="ECO:0000318"/>
    <property type="project" value="GO_Central"/>
</dbReference>
<dbReference type="FunFam" id="3.40.50.1820:FF:000008">
    <property type="entry name" value="Alpha/beta hydrolase domain-containing protein 17B"/>
    <property type="match status" value="1"/>
</dbReference>
<dbReference type="Gene3D" id="3.40.50.1820">
    <property type="entry name" value="alpha/beta hydrolase"/>
    <property type="match status" value="1"/>
</dbReference>
<dbReference type="InterPro" id="IPR029058">
    <property type="entry name" value="AB_hydrolase_fold"/>
</dbReference>
<dbReference type="InterPro" id="IPR022742">
    <property type="entry name" value="Hydrolase_4"/>
</dbReference>
<dbReference type="PANTHER" id="PTHR12277">
    <property type="entry name" value="ALPHA/BETA HYDROLASE DOMAIN-CONTAINING PROTEIN"/>
    <property type="match status" value="1"/>
</dbReference>
<dbReference type="PANTHER" id="PTHR12277:SF55">
    <property type="entry name" value="ALPHA_BETA HYDROLASE DOMAIN-CONTAINING PROTEIN 17C"/>
    <property type="match status" value="1"/>
</dbReference>
<dbReference type="Pfam" id="PF12146">
    <property type="entry name" value="Hydrolase_4"/>
    <property type="match status" value="1"/>
</dbReference>
<dbReference type="SUPFAM" id="SSF53474">
    <property type="entry name" value="alpha/beta-Hydrolases"/>
    <property type="match status" value="1"/>
</dbReference>
<accession>A5PKD9</accession>
<sequence length="329" mass="35864">MPEPGPRMNGFSLGELCWLFCCPPCPSRIAAKLAFLPPEPTYTVLAPEQRGPGAPAPASAASTSSASAAAQPAPQQPEEGGAGPGACSLHLSERADWQYSQRELDAVEVFFSRTARDNRLGCMFVRCAPSSRYTLLFSHGNAVDLGQMCSFYIGLGSRINCNIFSYDYSGYGVSSGKPSEKNLYADIDAAWQALRTRYGVSPENIILYGQSIGTVPTVDLASRYECAAVILHSPLMSGLRVAFPDTRKTYCFDAFPSIDKISKVTSPVLVIHGTEDEVIDFSHGLAMYERCPRAVEPLWVEGAGHNDIELYAQYLERLKQFISHELPNS</sequence>
<gene>
    <name evidence="3" type="primary">ABHD17C</name>
</gene>
<name>AB17C_BOVIN</name>
<evidence type="ECO:0000250" key="1">
    <source>
        <dbReference type="UniProtKB" id="B5DFK7"/>
    </source>
</evidence>
<evidence type="ECO:0000250" key="2">
    <source>
        <dbReference type="UniProtKB" id="O75608"/>
    </source>
</evidence>
<evidence type="ECO:0000250" key="3">
    <source>
        <dbReference type="UniProtKB" id="Q6PCB6"/>
    </source>
</evidence>
<evidence type="ECO:0000250" key="4">
    <source>
        <dbReference type="UniProtKB" id="Q7M759"/>
    </source>
</evidence>
<evidence type="ECO:0000250" key="5">
    <source>
        <dbReference type="UniProtKB" id="Q8VCV1"/>
    </source>
</evidence>
<evidence type="ECO:0000250" key="6">
    <source>
        <dbReference type="UniProtKB" id="Q96GS6"/>
    </source>
</evidence>
<evidence type="ECO:0000256" key="7">
    <source>
        <dbReference type="SAM" id="MobiDB-lite"/>
    </source>
</evidence>
<evidence type="ECO:0000305" key="8"/>
<organism>
    <name type="scientific">Bos taurus</name>
    <name type="common">Bovine</name>
    <dbReference type="NCBI Taxonomy" id="9913"/>
    <lineage>
        <taxon>Eukaryota</taxon>
        <taxon>Metazoa</taxon>
        <taxon>Chordata</taxon>
        <taxon>Craniata</taxon>
        <taxon>Vertebrata</taxon>
        <taxon>Euteleostomi</taxon>
        <taxon>Mammalia</taxon>
        <taxon>Eutheria</taxon>
        <taxon>Laurasiatheria</taxon>
        <taxon>Artiodactyla</taxon>
        <taxon>Ruminantia</taxon>
        <taxon>Pecora</taxon>
        <taxon>Bovidae</taxon>
        <taxon>Bovinae</taxon>
        <taxon>Bos</taxon>
    </lineage>
</organism>
<protein>
    <recommendedName>
        <fullName evidence="8">Alpha/beta hydrolase domain-containing protein 17C</fullName>
        <shortName evidence="3">Abhydrolase domain-containing protein 17C</shortName>
        <ecNumber evidence="5">3.1.2.22</ecNumber>
    </recommendedName>
</protein>
<keyword id="KW-1003">Cell membrane</keyword>
<keyword id="KW-0966">Cell projection</keyword>
<keyword id="KW-0967">Endosome</keyword>
<keyword id="KW-0378">Hydrolase</keyword>
<keyword id="KW-0449">Lipoprotein</keyword>
<keyword id="KW-0472">Membrane</keyword>
<keyword id="KW-0564">Palmitate</keyword>
<keyword id="KW-0628">Postsynaptic cell membrane</keyword>
<keyword id="KW-1185">Reference proteome</keyword>
<keyword id="KW-0770">Synapse</keyword>